<organism>
    <name type="scientific">Arabidopsis thaliana</name>
    <name type="common">Mouse-ear cress</name>
    <dbReference type="NCBI Taxonomy" id="3702"/>
    <lineage>
        <taxon>Eukaryota</taxon>
        <taxon>Viridiplantae</taxon>
        <taxon>Streptophyta</taxon>
        <taxon>Embryophyta</taxon>
        <taxon>Tracheophyta</taxon>
        <taxon>Spermatophyta</taxon>
        <taxon>Magnoliopsida</taxon>
        <taxon>eudicotyledons</taxon>
        <taxon>Gunneridae</taxon>
        <taxon>Pentapetalae</taxon>
        <taxon>rosids</taxon>
        <taxon>malvids</taxon>
        <taxon>Brassicales</taxon>
        <taxon>Brassicaceae</taxon>
        <taxon>Camelineae</taxon>
        <taxon>Arabidopsis</taxon>
    </lineage>
</organism>
<name>MCA3_ARATH</name>
<reference key="1">
    <citation type="journal article" date="2004" name="J. Biol. Chem.">
        <title>Type II metacaspases Atmc4 and Atmc9 of Arabidopsis thaliana cleave substrates after arginine and lysine.</title>
        <authorList>
            <person name="Vercammen D."/>
            <person name="van de Cotte B."/>
            <person name="De Jaeger G."/>
            <person name="Eeckhout D."/>
            <person name="Casteels P."/>
            <person name="Vandepoele K."/>
            <person name="Vandenberghe I."/>
            <person name="van Beeumen J."/>
            <person name="Inze D."/>
            <person name="van Breusegem F."/>
        </authorList>
    </citation>
    <scope>NUCLEOTIDE SEQUENCE [MRNA]</scope>
    <scope>GENE FAMILY</scope>
    <scope>NOMENCLATURE</scope>
</reference>
<reference key="2">
    <citation type="submission" date="1998-08" db="EMBL/GenBank/DDBJ databases">
        <title>Arabidopsis thaliana mRNA of unknown function.</title>
        <authorList>
            <person name="Olney M.A."/>
            <person name="Briggs W.R."/>
        </authorList>
    </citation>
    <scope>NUCLEOTIDE SEQUENCE [MRNA]</scope>
    <source>
        <strain>cv. Columbia</strain>
    </source>
</reference>
<reference key="3">
    <citation type="submission" date="2003-06" db="EMBL/GenBank/DDBJ databases">
        <title>Characterization of metacaspases.</title>
        <authorList>
            <person name="Ikeda Y."/>
            <person name="Krishnamurthy N."/>
            <person name="Chua N.-H."/>
        </authorList>
    </citation>
    <scope>NUCLEOTIDE SEQUENCE [MRNA]</scope>
</reference>
<reference key="4">
    <citation type="journal article" date="1997" name="DNA Res.">
        <title>Structural analysis of Arabidopsis thaliana chromosome 5. III. Sequence features of the regions of 1,191,918 bp covered by seventeen physically assigned P1 clones.</title>
        <authorList>
            <person name="Nakamura Y."/>
            <person name="Sato S."/>
            <person name="Kaneko T."/>
            <person name="Kotani H."/>
            <person name="Asamizu E."/>
            <person name="Miyajima N."/>
            <person name="Tabata S."/>
        </authorList>
    </citation>
    <scope>NUCLEOTIDE SEQUENCE [LARGE SCALE GENOMIC DNA]</scope>
    <source>
        <strain>cv. Columbia</strain>
    </source>
</reference>
<reference key="5">
    <citation type="journal article" date="2017" name="Plant J.">
        <title>Araport11: a complete reannotation of the Arabidopsis thaliana reference genome.</title>
        <authorList>
            <person name="Cheng C.Y."/>
            <person name="Krishnakumar V."/>
            <person name="Chan A.P."/>
            <person name="Thibaud-Nissen F."/>
            <person name="Schobel S."/>
            <person name="Town C.D."/>
        </authorList>
    </citation>
    <scope>GENOME REANNOTATION</scope>
    <source>
        <strain>cv. Columbia</strain>
    </source>
</reference>
<reference key="6">
    <citation type="journal article" date="2003" name="Science">
        <title>Empirical analysis of transcriptional activity in the Arabidopsis genome.</title>
        <authorList>
            <person name="Yamada K."/>
            <person name="Lim J."/>
            <person name="Dale J.M."/>
            <person name="Chen H."/>
            <person name="Shinn P."/>
            <person name="Palm C.J."/>
            <person name="Southwick A.M."/>
            <person name="Wu H.C."/>
            <person name="Kim C.J."/>
            <person name="Nguyen M."/>
            <person name="Pham P.K."/>
            <person name="Cheuk R.F."/>
            <person name="Karlin-Newmann G."/>
            <person name="Liu S.X."/>
            <person name="Lam B."/>
            <person name="Sakano H."/>
            <person name="Wu T."/>
            <person name="Yu G."/>
            <person name="Miranda M."/>
            <person name="Quach H.L."/>
            <person name="Tripp M."/>
            <person name="Chang C.H."/>
            <person name="Lee J.M."/>
            <person name="Toriumi M.J."/>
            <person name="Chan M.M."/>
            <person name="Tang C.C."/>
            <person name="Onodera C.S."/>
            <person name="Deng J.M."/>
            <person name="Akiyama K."/>
            <person name="Ansari Y."/>
            <person name="Arakawa T."/>
            <person name="Banh J."/>
            <person name="Banno F."/>
            <person name="Bowser L."/>
            <person name="Brooks S.Y."/>
            <person name="Carninci P."/>
            <person name="Chao Q."/>
            <person name="Choy N."/>
            <person name="Enju A."/>
            <person name="Goldsmith A.D."/>
            <person name="Gurjal M."/>
            <person name="Hansen N.F."/>
            <person name="Hayashizaki Y."/>
            <person name="Johnson-Hopson C."/>
            <person name="Hsuan V.W."/>
            <person name="Iida K."/>
            <person name="Karnes M."/>
            <person name="Khan S."/>
            <person name="Koesema E."/>
            <person name="Ishida J."/>
            <person name="Jiang P.X."/>
            <person name="Jones T."/>
            <person name="Kawai J."/>
            <person name="Kamiya A."/>
            <person name="Meyers C."/>
            <person name="Nakajima M."/>
            <person name="Narusaka M."/>
            <person name="Seki M."/>
            <person name="Sakurai T."/>
            <person name="Satou M."/>
            <person name="Tamse R."/>
            <person name="Vaysberg M."/>
            <person name="Wallender E.K."/>
            <person name="Wong C."/>
            <person name="Yamamura Y."/>
            <person name="Yuan S."/>
            <person name="Shinozaki K."/>
            <person name="Davis R.W."/>
            <person name="Theologis A."/>
            <person name="Ecker J.R."/>
        </authorList>
    </citation>
    <scope>NUCLEOTIDE SEQUENCE [LARGE SCALE MRNA]</scope>
    <source>
        <strain>cv. Columbia</strain>
    </source>
</reference>
<reference key="7">
    <citation type="submission" date="2002-03" db="EMBL/GenBank/DDBJ databases">
        <title>Full-length cDNA from Arabidopsis thaliana.</title>
        <authorList>
            <person name="Brover V.V."/>
            <person name="Troukhan M.E."/>
            <person name="Alexandrov N.A."/>
            <person name="Lu Y.-P."/>
            <person name="Flavell R.B."/>
            <person name="Feldmann K.A."/>
        </authorList>
    </citation>
    <scope>NUCLEOTIDE SEQUENCE [LARGE SCALE MRNA]</scope>
</reference>
<reference key="8">
    <citation type="journal article" date="2004" name="Mol. Plant Pathol.">
        <title>Recent advance in the study of caspase-like proteases and Bax inhibitor-1 in plants: their possible roles as regulator of programmed cell death.</title>
        <authorList>
            <person name="Watanabe N."/>
            <person name="Lam E."/>
        </authorList>
    </citation>
    <scope>GENE FAMILY</scope>
</reference>
<protein>
    <recommendedName>
        <fullName>Metacaspase-3</fullName>
        <shortName>AtMC3</shortName>
        <ecNumber>3.4.22.-</ecNumber>
    </recommendedName>
    <alternativeName>
        <fullName>Metacaspase 1a</fullName>
        <shortName>AtMCP1a</shortName>
    </alternativeName>
</protein>
<comment type="alternative products">
    <event type="alternative splicing"/>
    <isoform>
        <id>Q9FMG1-1</id>
        <name>1</name>
        <sequence type="displayed"/>
    </isoform>
    <text>A number of isoforms are produced. According to EST sequences.</text>
</comment>
<comment type="similarity">
    <text evidence="2">Belongs to the peptidase C14B family.</text>
</comment>
<comment type="sequence caution" evidence="2">
    <conflict type="frameshift">
        <sequence resource="EMBL-CDS" id="AAD11574"/>
    </conflict>
</comment>
<gene>
    <name type="primary">AMC3</name>
    <name type="synonym">MCP1A</name>
    <name type="ordered locus">At5g64240</name>
    <name type="ORF">MSJ1.8</name>
</gene>
<feature type="chain" id="PRO_0000334601" description="Metacaspase-3">
    <location>
        <begin position="1"/>
        <end position="362"/>
    </location>
</feature>
<feature type="active site" evidence="1">
    <location>
        <position position="174"/>
    </location>
</feature>
<feature type="active site" evidence="1">
    <location>
        <position position="230"/>
    </location>
</feature>
<feature type="sequence conflict" description="In Ref. 1; AAP44516." evidence="2" ref="1">
    <original>R</original>
    <variation>K</variation>
    <location>
        <position position="151"/>
    </location>
</feature>
<feature type="sequence conflict" description="In Ref. 1; AAP44516." evidence="2" ref="1">
    <original>LV</original>
    <variation>VI</variation>
    <location>
        <begin position="157"/>
        <end position="158"/>
    </location>
</feature>
<feature type="sequence conflict" description="In Ref. 1; AAP44516." evidence="2" ref="1">
    <original>Q</original>
    <variation>E</variation>
    <location>
        <position position="177"/>
    </location>
</feature>
<keyword id="KW-0025">Alternative splicing</keyword>
<keyword id="KW-0378">Hydrolase</keyword>
<keyword id="KW-0645">Protease</keyword>
<keyword id="KW-1185">Reference proteome</keyword>
<keyword id="KW-0788">Thiol protease</keyword>
<dbReference type="EC" id="3.4.22.-"/>
<dbReference type="EMBL" id="AY219828">
    <property type="protein sequence ID" value="AAP44516.1"/>
    <property type="molecule type" value="mRNA"/>
</dbReference>
<dbReference type="EMBL" id="AF087435">
    <property type="protein sequence ID" value="AAD11574.1"/>
    <property type="status" value="ALT_FRAME"/>
    <property type="molecule type" value="mRNA"/>
</dbReference>
<dbReference type="EMBL" id="AY322527">
    <property type="protein sequence ID" value="AAP84708.1"/>
    <property type="molecule type" value="mRNA"/>
</dbReference>
<dbReference type="EMBL" id="AB008268">
    <property type="protein sequence ID" value="BAB09855.1"/>
    <property type="molecule type" value="Genomic_DNA"/>
</dbReference>
<dbReference type="EMBL" id="CP002688">
    <property type="protein sequence ID" value="AED97860.1"/>
    <property type="molecule type" value="Genomic_DNA"/>
</dbReference>
<dbReference type="EMBL" id="BT002395">
    <property type="protein sequence ID" value="AAO00755.1"/>
    <property type="molecule type" value="mRNA"/>
</dbReference>
<dbReference type="EMBL" id="BT010372">
    <property type="protein sequence ID" value="AAQ56815.1"/>
    <property type="molecule type" value="mRNA"/>
</dbReference>
<dbReference type="EMBL" id="AY086951">
    <property type="protein sequence ID" value="AAM64514.1"/>
    <property type="molecule type" value="mRNA"/>
</dbReference>
<dbReference type="PIR" id="T51728">
    <property type="entry name" value="T51728"/>
</dbReference>
<dbReference type="RefSeq" id="NP_201229.1">
    <molecule id="Q9FMG1-1"/>
    <property type="nucleotide sequence ID" value="NM_125820.3"/>
</dbReference>
<dbReference type="SMR" id="Q9FMG1"/>
<dbReference type="FunCoup" id="Q9FMG1">
    <property type="interactions" value="145"/>
</dbReference>
<dbReference type="STRING" id="3702.Q9FMG1"/>
<dbReference type="MEROPS" id="C14.A05"/>
<dbReference type="PaxDb" id="3702-AT5G64240.2"/>
<dbReference type="ProteomicsDB" id="239044">
    <molecule id="Q9FMG1-1"/>
</dbReference>
<dbReference type="EnsemblPlants" id="AT5G64240.2">
    <molecule id="Q9FMG1-1"/>
    <property type="protein sequence ID" value="AT5G64240.2"/>
    <property type="gene ID" value="AT5G64240"/>
</dbReference>
<dbReference type="GeneID" id="836545"/>
<dbReference type="Gramene" id="AT5G64240.2">
    <molecule id="Q9FMG1-1"/>
    <property type="protein sequence ID" value="AT5G64240.2"/>
    <property type="gene ID" value="AT5G64240"/>
</dbReference>
<dbReference type="KEGG" id="ath:AT5G64240"/>
<dbReference type="Araport" id="AT5G64240"/>
<dbReference type="TAIR" id="AT5G64240">
    <property type="gene designation" value="MC3"/>
</dbReference>
<dbReference type="eggNOG" id="KOG1546">
    <property type="taxonomic scope" value="Eukaryota"/>
</dbReference>
<dbReference type="HOGENOM" id="CLU_029389_2_2_1"/>
<dbReference type="InParanoid" id="Q9FMG1"/>
<dbReference type="OMA" id="LCSRYKW"/>
<dbReference type="PhylomeDB" id="Q9FMG1"/>
<dbReference type="PRO" id="PR:Q9FMG1"/>
<dbReference type="Proteomes" id="UP000006548">
    <property type="component" value="Chromosome 5"/>
</dbReference>
<dbReference type="ExpressionAtlas" id="Q9FMG1">
    <property type="expression patterns" value="baseline and differential"/>
</dbReference>
<dbReference type="GO" id="GO:0004197">
    <property type="term" value="F:cysteine-type endopeptidase activity"/>
    <property type="evidence" value="ECO:0007669"/>
    <property type="project" value="InterPro"/>
</dbReference>
<dbReference type="GO" id="GO:0006508">
    <property type="term" value="P:proteolysis"/>
    <property type="evidence" value="ECO:0007669"/>
    <property type="project" value="UniProtKB-KW"/>
</dbReference>
<dbReference type="Gene3D" id="3.40.50.12660">
    <property type="match status" value="1"/>
</dbReference>
<dbReference type="InterPro" id="IPR029030">
    <property type="entry name" value="Caspase-like_dom_sf"/>
</dbReference>
<dbReference type="InterPro" id="IPR050452">
    <property type="entry name" value="Metacaspase"/>
</dbReference>
<dbReference type="InterPro" id="IPR011600">
    <property type="entry name" value="Pept_C14_caspase"/>
</dbReference>
<dbReference type="PANTHER" id="PTHR48104:SF17">
    <property type="entry name" value="METACASPASE-3"/>
    <property type="match status" value="1"/>
</dbReference>
<dbReference type="PANTHER" id="PTHR48104">
    <property type="entry name" value="METACASPASE-4"/>
    <property type="match status" value="1"/>
</dbReference>
<dbReference type="Pfam" id="PF00656">
    <property type="entry name" value="Peptidase_C14"/>
    <property type="match status" value="1"/>
</dbReference>
<dbReference type="SUPFAM" id="SSF52129">
    <property type="entry name" value="Caspase-like"/>
    <property type="match status" value="1"/>
</dbReference>
<sequence>MASRREVRCRCGRRMWVQPDARTVQCSTCHTVTQLYSLVDIARGANRIIHGFQQLLRQHQPQHHEQQQQQMMAQPPPRLLEPLPSPFGKKRAVLCGVNYKGKSYSLKGCISDAKSMRSLLVQQMGFPIDSILMLTEDEASPQRIPTKRNIRKAMRWLVEGNRARDSLVFHFSGHGSQQNDYNGDEIDGQDEALCPLDHETEGKIIDDEINRILVRPLVHGAKLHAVIDACNSGTVLDLPFICRMERNGSYEWEDHRSVRAYKGTDGGAAFCFSACDDDESSGYTPVFTGKNTGAMTYSFIKAVKTAGPAPTYGHLLNLMCSAIREAQSRLAFNGDYTSSDASAEPLLTSSEEFDVYATKFVL</sequence>
<proteinExistence type="evidence at transcript level"/>
<evidence type="ECO:0000250" key="1"/>
<evidence type="ECO:0000305" key="2"/>
<accession>Q9FMG1</accession>
<accession>O82525</accession>
<accession>Q6XPT9</accession>